<keyword id="KW-0687">Ribonucleoprotein</keyword>
<keyword id="KW-0689">Ribosomal protein</keyword>
<feature type="chain" id="PRO_1000204549" description="Large ribosomal subunit protein bL36">
    <location>
        <begin position="1"/>
        <end position="41"/>
    </location>
</feature>
<dbReference type="EMBL" id="CP001600">
    <property type="protein sequence ID" value="ACR69340.1"/>
    <property type="molecule type" value="Genomic_DNA"/>
</dbReference>
<dbReference type="SMR" id="C5BFR3"/>
<dbReference type="STRING" id="67780.B6E78_03385"/>
<dbReference type="KEGG" id="eic:NT01EI_2165"/>
<dbReference type="HOGENOM" id="CLU_135723_3_3_6"/>
<dbReference type="OrthoDB" id="9801558at2"/>
<dbReference type="Proteomes" id="UP000001485">
    <property type="component" value="Chromosome"/>
</dbReference>
<dbReference type="GO" id="GO:1990904">
    <property type="term" value="C:ribonucleoprotein complex"/>
    <property type="evidence" value="ECO:0007669"/>
    <property type="project" value="UniProtKB-KW"/>
</dbReference>
<dbReference type="GO" id="GO:0005840">
    <property type="term" value="C:ribosome"/>
    <property type="evidence" value="ECO:0007669"/>
    <property type="project" value="UniProtKB-KW"/>
</dbReference>
<dbReference type="GO" id="GO:0003735">
    <property type="term" value="F:structural constituent of ribosome"/>
    <property type="evidence" value="ECO:0007669"/>
    <property type="project" value="InterPro"/>
</dbReference>
<dbReference type="GO" id="GO:0006412">
    <property type="term" value="P:translation"/>
    <property type="evidence" value="ECO:0007669"/>
    <property type="project" value="UniProtKB-UniRule"/>
</dbReference>
<dbReference type="HAMAP" id="MF_00251">
    <property type="entry name" value="Ribosomal_bL36"/>
    <property type="match status" value="1"/>
</dbReference>
<dbReference type="InterPro" id="IPR000473">
    <property type="entry name" value="Ribosomal_bL36"/>
</dbReference>
<dbReference type="InterPro" id="IPR035977">
    <property type="entry name" value="Ribosomal_bL36_sp"/>
</dbReference>
<dbReference type="InterPro" id="IPR047621">
    <property type="entry name" value="Ribosomal_L36_bact"/>
</dbReference>
<dbReference type="NCBIfam" id="NF002021">
    <property type="entry name" value="PRK00831.1"/>
    <property type="match status" value="1"/>
</dbReference>
<dbReference type="NCBIfam" id="TIGR01022">
    <property type="entry name" value="rpmJ_bact"/>
    <property type="match status" value="1"/>
</dbReference>
<dbReference type="PANTHER" id="PTHR47781">
    <property type="entry name" value="50S RIBOSOMAL PROTEIN L36 2"/>
    <property type="match status" value="1"/>
</dbReference>
<dbReference type="PANTHER" id="PTHR47781:SF1">
    <property type="entry name" value="LARGE RIBOSOMAL SUBUNIT PROTEIN BL36B"/>
    <property type="match status" value="1"/>
</dbReference>
<dbReference type="Pfam" id="PF00444">
    <property type="entry name" value="Ribosomal_L36"/>
    <property type="match status" value="1"/>
</dbReference>
<dbReference type="SUPFAM" id="SSF57840">
    <property type="entry name" value="Ribosomal protein L36"/>
    <property type="match status" value="1"/>
</dbReference>
<dbReference type="PROSITE" id="PS00828">
    <property type="entry name" value="RIBOSOMAL_L36"/>
    <property type="match status" value="1"/>
</dbReference>
<evidence type="ECO:0000255" key="1">
    <source>
        <dbReference type="HAMAP-Rule" id="MF_00251"/>
    </source>
</evidence>
<evidence type="ECO:0000305" key="2"/>
<protein>
    <recommendedName>
        <fullName evidence="1">Large ribosomal subunit protein bL36</fullName>
    </recommendedName>
    <alternativeName>
        <fullName evidence="2">50S ribosomal protein L36</fullName>
    </alternativeName>
</protein>
<gene>
    <name evidence="1" type="primary">rpmJ</name>
    <name type="ordered locus">NT01EI_2165</name>
</gene>
<organism>
    <name type="scientific">Edwardsiella ictaluri (strain 93-146)</name>
    <dbReference type="NCBI Taxonomy" id="634503"/>
    <lineage>
        <taxon>Bacteria</taxon>
        <taxon>Pseudomonadati</taxon>
        <taxon>Pseudomonadota</taxon>
        <taxon>Gammaproteobacteria</taxon>
        <taxon>Enterobacterales</taxon>
        <taxon>Hafniaceae</taxon>
        <taxon>Edwardsiella</taxon>
    </lineage>
</organism>
<accession>C5BFR3</accession>
<comment type="similarity">
    <text evidence="1">Belongs to the bacterial ribosomal protein bL36 family.</text>
</comment>
<proteinExistence type="inferred from homology"/>
<sequence length="41" mass="4978">MKILSSLKTAKHRHPDCRIVRRRGRLYVICKSDPRFKARQR</sequence>
<reference key="1">
    <citation type="submission" date="2009-03" db="EMBL/GenBank/DDBJ databases">
        <title>Complete genome sequence of Edwardsiella ictaluri 93-146.</title>
        <authorList>
            <person name="Williams M.L."/>
            <person name="Gillaspy A.F."/>
            <person name="Dyer D.W."/>
            <person name="Thune R.L."/>
            <person name="Waldbieser G.C."/>
            <person name="Schuster S.C."/>
            <person name="Gipson J."/>
            <person name="Zaitshik J."/>
            <person name="Landry C."/>
            <person name="Lawrence M.L."/>
        </authorList>
    </citation>
    <scope>NUCLEOTIDE SEQUENCE [LARGE SCALE GENOMIC DNA]</scope>
    <source>
        <strain>93-146</strain>
    </source>
</reference>
<name>RL36_EDWI9</name>